<reference key="1">
    <citation type="book" date="2006" name="Gram positive pathogens, 2nd edition">
        <title>The Staphylococcus aureus NCTC 8325 genome.</title>
        <editorList>
            <person name="Fischetti V."/>
            <person name="Novick R."/>
            <person name="Ferretti J."/>
            <person name="Portnoy D."/>
            <person name="Rood J."/>
        </editorList>
        <authorList>
            <person name="Gillaspy A.F."/>
            <person name="Worrell V."/>
            <person name="Orvis J."/>
            <person name="Roe B.A."/>
            <person name="Dyer D.W."/>
            <person name="Iandolo J.J."/>
        </authorList>
    </citation>
    <scope>NUCLEOTIDE SEQUENCE [LARGE SCALE GENOMIC DNA]</scope>
    <source>
        <strain>NCTC 8325 / PS 47</strain>
    </source>
</reference>
<name>XPT_STAA8</name>
<keyword id="KW-0963">Cytoplasm</keyword>
<keyword id="KW-0328">Glycosyltransferase</keyword>
<keyword id="KW-0660">Purine salvage</keyword>
<keyword id="KW-1185">Reference proteome</keyword>
<keyword id="KW-0808">Transferase</keyword>
<sequence length="192" mass="20884">MELLGQKVKEDGVVIDEKILKVDGFLNHQIDAKLMNEVGRTFYEQFKDKGITKILTIEASGIAPAIMAALHFDVPCLFAKKAKPSTLTDGYYETSIHSFTKNKTSTVIVSKEFLSEEDTVLIIDDFLANGDASLGLYDIAQQANAKTAGIGIVVEKSFQNGHQRLEEAGLTVSSLCKVASLEGNKVTLVGEE</sequence>
<accession>Q2G0Y9</accession>
<evidence type="ECO:0000255" key="1">
    <source>
        <dbReference type="HAMAP-Rule" id="MF_01184"/>
    </source>
</evidence>
<protein>
    <recommendedName>
        <fullName evidence="1">Xanthine phosphoribosyltransferase</fullName>
        <shortName evidence="1">XPRTase</shortName>
        <ecNumber evidence="1">2.4.2.22</ecNumber>
    </recommendedName>
</protein>
<organism>
    <name type="scientific">Staphylococcus aureus (strain NCTC 8325 / PS 47)</name>
    <dbReference type="NCBI Taxonomy" id="93061"/>
    <lineage>
        <taxon>Bacteria</taxon>
        <taxon>Bacillati</taxon>
        <taxon>Bacillota</taxon>
        <taxon>Bacilli</taxon>
        <taxon>Bacillales</taxon>
        <taxon>Staphylococcaceae</taxon>
        <taxon>Staphylococcus</taxon>
    </lineage>
</organism>
<feature type="chain" id="PRO_0000339751" description="Xanthine phosphoribosyltransferase">
    <location>
        <begin position="1"/>
        <end position="192"/>
    </location>
</feature>
<feature type="binding site" evidence="1">
    <location>
        <position position="20"/>
    </location>
    <ligand>
        <name>xanthine</name>
        <dbReference type="ChEBI" id="CHEBI:17712"/>
    </ligand>
</feature>
<feature type="binding site" evidence="1">
    <location>
        <position position="27"/>
    </location>
    <ligand>
        <name>xanthine</name>
        <dbReference type="ChEBI" id="CHEBI:17712"/>
    </ligand>
</feature>
<feature type="binding site" evidence="1">
    <location>
        <begin position="128"/>
        <end position="132"/>
    </location>
    <ligand>
        <name>5-phospho-alpha-D-ribose 1-diphosphate</name>
        <dbReference type="ChEBI" id="CHEBI:58017"/>
    </ligand>
</feature>
<feature type="binding site" evidence="1">
    <location>
        <position position="156"/>
    </location>
    <ligand>
        <name>xanthine</name>
        <dbReference type="ChEBI" id="CHEBI:17712"/>
    </ligand>
</feature>
<gene>
    <name evidence="1" type="primary">xpt</name>
    <name type="ordered locus">SAOUHSC_00372</name>
</gene>
<proteinExistence type="inferred from homology"/>
<dbReference type="EC" id="2.4.2.22" evidence="1"/>
<dbReference type="EMBL" id="CP000253">
    <property type="protein sequence ID" value="ABD29538.1"/>
    <property type="molecule type" value="Genomic_DNA"/>
</dbReference>
<dbReference type="RefSeq" id="WP_000421410.1">
    <property type="nucleotide sequence ID" value="NZ_LS483365.1"/>
</dbReference>
<dbReference type="RefSeq" id="YP_498961.1">
    <property type="nucleotide sequence ID" value="NC_007795.1"/>
</dbReference>
<dbReference type="SMR" id="Q2G0Y9"/>
<dbReference type="STRING" id="93061.SAOUHSC_00372"/>
<dbReference type="PaxDb" id="1280-SAXN108_0437"/>
<dbReference type="GeneID" id="3919791"/>
<dbReference type="GeneID" id="66838694"/>
<dbReference type="KEGG" id="sao:SAOUHSC_00372"/>
<dbReference type="PATRIC" id="fig|93061.5.peg.342"/>
<dbReference type="eggNOG" id="COG0503">
    <property type="taxonomic scope" value="Bacteria"/>
</dbReference>
<dbReference type="HOGENOM" id="CLU_099015_0_0_9"/>
<dbReference type="OrthoDB" id="9790678at2"/>
<dbReference type="UniPathway" id="UPA00602">
    <property type="reaction ID" value="UER00658"/>
</dbReference>
<dbReference type="PRO" id="PR:Q2G0Y9"/>
<dbReference type="Proteomes" id="UP000008816">
    <property type="component" value="Chromosome"/>
</dbReference>
<dbReference type="GO" id="GO:0005737">
    <property type="term" value="C:cytoplasm"/>
    <property type="evidence" value="ECO:0007669"/>
    <property type="project" value="UniProtKB-SubCell"/>
</dbReference>
<dbReference type="GO" id="GO:0000310">
    <property type="term" value="F:xanthine phosphoribosyltransferase activity"/>
    <property type="evidence" value="ECO:0007669"/>
    <property type="project" value="UniProtKB-UniRule"/>
</dbReference>
<dbReference type="GO" id="GO:0006166">
    <property type="term" value="P:purine ribonucleoside salvage"/>
    <property type="evidence" value="ECO:0007669"/>
    <property type="project" value="UniProtKB-KW"/>
</dbReference>
<dbReference type="GO" id="GO:0046110">
    <property type="term" value="P:xanthine metabolic process"/>
    <property type="evidence" value="ECO:0007669"/>
    <property type="project" value="InterPro"/>
</dbReference>
<dbReference type="GO" id="GO:0032265">
    <property type="term" value="P:XMP salvage"/>
    <property type="evidence" value="ECO:0007669"/>
    <property type="project" value="UniProtKB-UniRule"/>
</dbReference>
<dbReference type="CDD" id="cd06223">
    <property type="entry name" value="PRTases_typeI"/>
    <property type="match status" value="1"/>
</dbReference>
<dbReference type="Gene3D" id="3.40.50.2020">
    <property type="match status" value="1"/>
</dbReference>
<dbReference type="HAMAP" id="MF_01184">
    <property type="entry name" value="XPRTase"/>
    <property type="match status" value="1"/>
</dbReference>
<dbReference type="InterPro" id="IPR000836">
    <property type="entry name" value="PRibTrfase_dom"/>
</dbReference>
<dbReference type="InterPro" id="IPR029057">
    <property type="entry name" value="PRTase-like"/>
</dbReference>
<dbReference type="InterPro" id="IPR050118">
    <property type="entry name" value="Pur/Pyrimidine_PRTase"/>
</dbReference>
<dbReference type="InterPro" id="IPR010079">
    <property type="entry name" value="Xanthine_PRibTrfase"/>
</dbReference>
<dbReference type="NCBIfam" id="NF006671">
    <property type="entry name" value="PRK09219.1"/>
    <property type="match status" value="1"/>
</dbReference>
<dbReference type="NCBIfam" id="TIGR01744">
    <property type="entry name" value="XPRTase"/>
    <property type="match status" value="1"/>
</dbReference>
<dbReference type="PANTHER" id="PTHR43864">
    <property type="entry name" value="HYPOXANTHINE/GUANINE PHOSPHORIBOSYLTRANSFERASE"/>
    <property type="match status" value="1"/>
</dbReference>
<dbReference type="PANTHER" id="PTHR43864:SF1">
    <property type="entry name" value="XANTHINE PHOSPHORIBOSYLTRANSFERASE"/>
    <property type="match status" value="1"/>
</dbReference>
<dbReference type="SUPFAM" id="SSF53271">
    <property type="entry name" value="PRTase-like"/>
    <property type="match status" value="1"/>
</dbReference>
<comment type="function">
    <text evidence="1">Converts the preformed base xanthine, a product of nucleic acid breakdown, to xanthosine 5'-monophosphate (XMP), so it can be reused for RNA or DNA synthesis.</text>
</comment>
<comment type="catalytic activity">
    <reaction evidence="1">
        <text>XMP + diphosphate = xanthine + 5-phospho-alpha-D-ribose 1-diphosphate</text>
        <dbReference type="Rhea" id="RHEA:10800"/>
        <dbReference type="ChEBI" id="CHEBI:17712"/>
        <dbReference type="ChEBI" id="CHEBI:33019"/>
        <dbReference type="ChEBI" id="CHEBI:57464"/>
        <dbReference type="ChEBI" id="CHEBI:58017"/>
        <dbReference type="EC" id="2.4.2.22"/>
    </reaction>
</comment>
<comment type="pathway">
    <text evidence="1">Purine metabolism; XMP biosynthesis via salvage pathway; XMP from xanthine: step 1/1.</text>
</comment>
<comment type="subunit">
    <text evidence="1">Homodimer.</text>
</comment>
<comment type="subcellular location">
    <subcellularLocation>
        <location evidence="1">Cytoplasm</location>
    </subcellularLocation>
</comment>
<comment type="similarity">
    <text evidence="1">Belongs to the purine/pyrimidine phosphoribosyltransferase family. Xpt subfamily.</text>
</comment>